<dbReference type="EC" id="1.17.1.8" evidence="1"/>
<dbReference type="EMBL" id="CP000382">
    <property type="protein sequence ID" value="ABK61671.1"/>
    <property type="molecule type" value="Genomic_DNA"/>
</dbReference>
<dbReference type="RefSeq" id="WP_011721829.1">
    <property type="nucleotide sequence ID" value="NC_008593.1"/>
</dbReference>
<dbReference type="SMR" id="A0PZM2"/>
<dbReference type="STRING" id="386415.NT01CX_1745"/>
<dbReference type="KEGG" id="cno:NT01CX_1745"/>
<dbReference type="eggNOG" id="COG0289">
    <property type="taxonomic scope" value="Bacteria"/>
</dbReference>
<dbReference type="HOGENOM" id="CLU_047479_2_2_9"/>
<dbReference type="UniPathway" id="UPA00034">
    <property type="reaction ID" value="UER00018"/>
</dbReference>
<dbReference type="Proteomes" id="UP000008220">
    <property type="component" value="Chromosome"/>
</dbReference>
<dbReference type="GO" id="GO:0005829">
    <property type="term" value="C:cytosol"/>
    <property type="evidence" value="ECO:0007669"/>
    <property type="project" value="TreeGrafter"/>
</dbReference>
<dbReference type="GO" id="GO:0008839">
    <property type="term" value="F:4-hydroxy-tetrahydrodipicolinate reductase"/>
    <property type="evidence" value="ECO:0007669"/>
    <property type="project" value="UniProtKB-EC"/>
</dbReference>
<dbReference type="GO" id="GO:0051287">
    <property type="term" value="F:NAD binding"/>
    <property type="evidence" value="ECO:0007669"/>
    <property type="project" value="UniProtKB-UniRule"/>
</dbReference>
<dbReference type="GO" id="GO:0050661">
    <property type="term" value="F:NADP binding"/>
    <property type="evidence" value="ECO:0007669"/>
    <property type="project" value="UniProtKB-UniRule"/>
</dbReference>
<dbReference type="GO" id="GO:0016726">
    <property type="term" value="F:oxidoreductase activity, acting on CH or CH2 groups, NAD or NADP as acceptor"/>
    <property type="evidence" value="ECO:0007669"/>
    <property type="project" value="UniProtKB-UniRule"/>
</dbReference>
<dbReference type="GO" id="GO:0019877">
    <property type="term" value="P:diaminopimelate biosynthetic process"/>
    <property type="evidence" value="ECO:0007669"/>
    <property type="project" value="UniProtKB-UniRule"/>
</dbReference>
<dbReference type="GO" id="GO:0009089">
    <property type="term" value="P:lysine biosynthetic process via diaminopimelate"/>
    <property type="evidence" value="ECO:0007669"/>
    <property type="project" value="UniProtKB-UniRule"/>
</dbReference>
<dbReference type="CDD" id="cd02274">
    <property type="entry name" value="DHDPR_N"/>
    <property type="match status" value="1"/>
</dbReference>
<dbReference type="FunFam" id="3.30.360.10:FF:000009">
    <property type="entry name" value="4-hydroxy-tetrahydrodipicolinate reductase"/>
    <property type="match status" value="1"/>
</dbReference>
<dbReference type="Gene3D" id="3.30.360.10">
    <property type="entry name" value="Dihydrodipicolinate Reductase, domain 2"/>
    <property type="match status" value="1"/>
</dbReference>
<dbReference type="Gene3D" id="3.40.50.720">
    <property type="entry name" value="NAD(P)-binding Rossmann-like Domain"/>
    <property type="match status" value="1"/>
</dbReference>
<dbReference type="HAMAP" id="MF_00102">
    <property type="entry name" value="DapB"/>
    <property type="match status" value="1"/>
</dbReference>
<dbReference type="InterPro" id="IPR022663">
    <property type="entry name" value="DapB_C"/>
</dbReference>
<dbReference type="InterPro" id="IPR000846">
    <property type="entry name" value="DapB_N"/>
</dbReference>
<dbReference type="InterPro" id="IPR022664">
    <property type="entry name" value="DapB_N_CS"/>
</dbReference>
<dbReference type="InterPro" id="IPR023940">
    <property type="entry name" value="DHDPR_bac"/>
</dbReference>
<dbReference type="InterPro" id="IPR036291">
    <property type="entry name" value="NAD(P)-bd_dom_sf"/>
</dbReference>
<dbReference type="NCBIfam" id="TIGR00036">
    <property type="entry name" value="dapB"/>
    <property type="match status" value="1"/>
</dbReference>
<dbReference type="PANTHER" id="PTHR20836:SF7">
    <property type="entry name" value="4-HYDROXY-TETRAHYDRODIPICOLINATE REDUCTASE"/>
    <property type="match status" value="1"/>
</dbReference>
<dbReference type="PANTHER" id="PTHR20836">
    <property type="entry name" value="DIHYDRODIPICOLINATE REDUCTASE"/>
    <property type="match status" value="1"/>
</dbReference>
<dbReference type="Pfam" id="PF05173">
    <property type="entry name" value="DapB_C"/>
    <property type="match status" value="1"/>
</dbReference>
<dbReference type="Pfam" id="PF01113">
    <property type="entry name" value="DapB_N"/>
    <property type="match status" value="1"/>
</dbReference>
<dbReference type="PIRSF" id="PIRSF000161">
    <property type="entry name" value="DHPR"/>
    <property type="match status" value="1"/>
</dbReference>
<dbReference type="SUPFAM" id="SSF55347">
    <property type="entry name" value="Glyceraldehyde-3-phosphate dehydrogenase-like, C-terminal domain"/>
    <property type="match status" value="1"/>
</dbReference>
<dbReference type="SUPFAM" id="SSF51735">
    <property type="entry name" value="NAD(P)-binding Rossmann-fold domains"/>
    <property type="match status" value="1"/>
</dbReference>
<dbReference type="PROSITE" id="PS01298">
    <property type="entry name" value="DAPB"/>
    <property type="match status" value="1"/>
</dbReference>
<evidence type="ECO:0000255" key="1">
    <source>
        <dbReference type="HAMAP-Rule" id="MF_00102"/>
    </source>
</evidence>
<evidence type="ECO:0000305" key="2"/>
<name>DAPB_CLONN</name>
<reference key="1">
    <citation type="journal article" date="2006" name="Nat. Biotechnol.">
        <title>The genome and transcriptomes of the anti-tumor agent Clostridium novyi-NT.</title>
        <authorList>
            <person name="Bettegowda C."/>
            <person name="Huang X."/>
            <person name="Lin J."/>
            <person name="Cheong I."/>
            <person name="Kohli M."/>
            <person name="Szabo S.A."/>
            <person name="Zhang X."/>
            <person name="Diaz L.A. Jr."/>
            <person name="Velculescu V.E."/>
            <person name="Parmigiani G."/>
            <person name="Kinzler K.W."/>
            <person name="Vogelstein B."/>
            <person name="Zhou S."/>
        </authorList>
    </citation>
    <scope>NUCLEOTIDE SEQUENCE [LARGE SCALE GENOMIC DNA]</scope>
    <source>
        <strain>NT</strain>
    </source>
</reference>
<organism>
    <name type="scientific">Clostridium novyi (strain NT)</name>
    <dbReference type="NCBI Taxonomy" id="386415"/>
    <lineage>
        <taxon>Bacteria</taxon>
        <taxon>Bacillati</taxon>
        <taxon>Bacillota</taxon>
        <taxon>Clostridia</taxon>
        <taxon>Eubacteriales</taxon>
        <taxon>Clostridiaceae</taxon>
        <taxon>Clostridium</taxon>
    </lineage>
</organism>
<accession>A0PZM2</accession>
<protein>
    <recommendedName>
        <fullName evidence="1">4-hydroxy-tetrahydrodipicolinate reductase</fullName>
        <shortName evidence="1">HTPA reductase</shortName>
        <ecNumber evidence="1">1.17.1.8</ecNumber>
    </recommendedName>
</protein>
<sequence>MTKVILSGCSGKMGKMISQSVNNFEGLSIVAGIDKFKDESLKYPIFENITECDVNADVVLDFSRPDALDSLLSYSKDNNLPVVLCTTGYSKEQLDKIDEYSKIVPVFHSANMSIGINLINNILKDISAMLYENYDIEIIEKHHNQKVDAPSGTALLLGNTIKDSIKEDTVFNKGRNGIKKREKNEIGIHAIRGGSIVGEHEVIFAGAGEIIELKHTALSREVFAMGALKACEYMAGKNNGLYTMDDVIKSKN</sequence>
<gene>
    <name evidence="1" type="primary">dapB</name>
    <name type="ordered locus">NT01CX_1745</name>
</gene>
<proteinExistence type="inferred from homology"/>
<keyword id="KW-0028">Amino-acid biosynthesis</keyword>
<keyword id="KW-0963">Cytoplasm</keyword>
<keyword id="KW-0220">Diaminopimelate biosynthesis</keyword>
<keyword id="KW-0457">Lysine biosynthesis</keyword>
<keyword id="KW-0520">NAD</keyword>
<keyword id="KW-0521">NADP</keyword>
<keyword id="KW-0560">Oxidoreductase</keyword>
<keyword id="KW-1185">Reference proteome</keyword>
<comment type="function">
    <text evidence="1">Catalyzes the conversion of 4-hydroxy-tetrahydrodipicolinate (HTPA) to tetrahydrodipicolinate.</text>
</comment>
<comment type="catalytic activity">
    <reaction evidence="1">
        <text>(S)-2,3,4,5-tetrahydrodipicolinate + NAD(+) + H2O = (2S,4S)-4-hydroxy-2,3,4,5-tetrahydrodipicolinate + NADH + H(+)</text>
        <dbReference type="Rhea" id="RHEA:35323"/>
        <dbReference type="ChEBI" id="CHEBI:15377"/>
        <dbReference type="ChEBI" id="CHEBI:15378"/>
        <dbReference type="ChEBI" id="CHEBI:16845"/>
        <dbReference type="ChEBI" id="CHEBI:57540"/>
        <dbReference type="ChEBI" id="CHEBI:57945"/>
        <dbReference type="ChEBI" id="CHEBI:67139"/>
        <dbReference type="EC" id="1.17.1.8"/>
    </reaction>
</comment>
<comment type="catalytic activity">
    <reaction evidence="1">
        <text>(S)-2,3,4,5-tetrahydrodipicolinate + NADP(+) + H2O = (2S,4S)-4-hydroxy-2,3,4,5-tetrahydrodipicolinate + NADPH + H(+)</text>
        <dbReference type="Rhea" id="RHEA:35331"/>
        <dbReference type="ChEBI" id="CHEBI:15377"/>
        <dbReference type="ChEBI" id="CHEBI:15378"/>
        <dbReference type="ChEBI" id="CHEBI:16845"/>
        <dbReference type="ChEBI" id="CHEBI:57783"/>
        <dbReference type="ChEBI" id="CHEBI:58349"/>
        <dbReference type="ChEBI" id="CHEBI:67139"/>
        <dbReference type="EC" id="1.17.1.8"/>
    </reaction>
</comment>
<comment type="pathway">
    <text evidence="1">Amino-acid biosynthesis; L-lysine biosynthesis via DAP pathway; (S)-tetrahydrodipicolinate from L-aspartate: step 4/4.</text>
</comment>
<comment type="subcellular location">
    <subcellularLocation>
        <location evidence="1">Cytoplasm</location>
    </subcellularLocation>
</comment>
<comment type="similarity">
    <text evidence="1">Belongs to the DapB family.</text>
</comment>
<comment type="caution">
    <text evidence="2">Was originally thought to be a dihydrodipicolinate reductase (DHDPR), catalyzing the conversion of dihydrodipicolinate to tetrahydrodipicolinate. However, it was shown in E.coli that the substrate of the enzymatic reaction is not dihydrodipicolinate (DHDP) but in fact (2S,4S)-4-hydroxy-2,3,4,5-tetrahydrodipicolinic acid (HTPA), the product released by the DapA-catalyzed reaction.</text>
</comment>
<feature type="chain" id="PRO_1000057682" description="4-hydroxy-tetrahydrodipicolinate reductase">
    <location>
        <begin position="1"/>
        <end position="252"/>
    </location>
</feature>
<feature type="active site" description="Proton donor/acceptor" evidence="1">
    <location>
        <position position="142"/>
    </location>
</feature>
<feature type="active site" description="Proton donor" evidence="1">
    <location>
        <position position="146"/>
    </location>
</feature>
<feature type="binding site" evidence="1">
    <location>
        <begin position="8"/>
        <end position="13"/>
    </location>
    <ligand>
        <name>NAD(+)</name>
        <dbReference type="ChEBI" id="CHEBI:57540"/>
    </ligand>
</feature>
<feature type="binding site" evidence="1">
    <location>
        <begin position="85"/>
        <end position="87"/>
    </location>
    <ligand>
        <name>NAD(+)</name>
        <dbReference type="ChEBI" id="CHEBI:57540"/>
    </ligand>
</feature>
<feature type="binding site" evidence="1">
    <location>
        <begin position="109"/>
        <end position="112"/>
    </location>
    <ligand>
        <name>NAD(+)</name>
        <dbReference type="ChEBI" id="CHEBI:57540"/>
    </ligand>
</feature>
<feature type="binding site" evidence="1">
    <location>
        <position position="143"/>
    </location>
    <ligand>
        <name>(S)-2,3,4,5-tetrahydrodipicolinate</name>
        <dbReference type="ChEBI" id="CHEBI:16845"/>
    </ligand>
</feature>
<feature type="binding site" evidence="1">
    <location>
        <begin position="152"/>
        <end position="153"/>
    </location>
    <ligand>
        <name>(S)-2,3,4,5-tetrahydrodipicolinate</name>
        <dbReference type="ChEBI" id="CHEBI:16845"/>
    </ligand>
</feature>